<gene>
    <name type="ordered locus">AF_0105</name>
</gene>
<reference key="1">
    <citation type="journal article" date="1997" name="Nature">
        <title>The complete genome sequence of the hyperthermophilic, sulphate-reducing archaeon Archaeoglobus fulgidus.</title>
        <authorList>
            <person name="Klenk H.-P."/>
            <person name="Clayton R.A."/>
            <person name="Tomb J.-F."/>
            <person name="White O."/>
            <person name="Nelson K.E."/>
            <person name="Ketchum K.A."/>
            <person name="Dodson R.J."/>
            <person name="Gwinn M.L."/>
            <person name="Hickey E.K."/>
            <person name="Peterson J.D."/>
            <person name="Richardson D.L."/>
            <person name="Kerlavage A.R."/>
            <person name="Graham D.E."/>
            <person name="Kyrpides N.C."/>
            <person name="Fleischmann R.D."/>
            <person name="Quackenbush J."/>
            <person name="Lee N.H."/>
            <person name="Sutton G.G."/>
            <person name="Gill S.R."/>
            <person name="Kirkness E.F."/>
            <person name="Dougherty B.A."/>
            <person name="McKenney K."/>
            <person name="Adams M.D."/>
            <person name="Loftus B.J."/>
            <person name="Peterson S.N."/>
            <person name="Reich C.I."/>
            <person name="McNeil L.K."/>
            <person name="Badger J.H."/>
            <person name="Glodek A."/>
            <person name="Zhou L."/>
            <person name="Overbeek R."/>
            <person name="Gocayne J.D."/>
            <person name="Weidman J.F."/>
            <person name="McDonald L.A."/>
            <person name="Utterback T.R."/>
            <person name="Cotton M.D."/>
            <person name="Spriggs T."/>
            <person name="Artiach P."/>
            <person name="Kaine B.P."/>
            <person name="Sykes S.M."/>
            <person name="Sadow P.W."/>
            <person name="D'Andrea K.P."/>
            <person name="Bowman C."/>
            <person name="Fujii C."/>
            <person name="Garland S.A."/>
            <person name="Mason T.M."/>
            <person name="Olsen G.J."/>
            <person name="Fraser C.M."/>
            <person name="Smith H.O."/>
            <person name="Woese C.R."/>
            <person name="Venter J.C."/>
        </authorList>
    </citation>
    <scope>NUCLEOTIDE SEQUENCE [LARGE SCALE GENOMIC DNA]</scope>
    <source>
        <strain>ATCC 49558 / DSM 4304 / JCM 9628 / NBRC 100126 / VC-16</strain>
    </source>
</reference>
<proteinExistence type="inferred from homology"/>
<comment type="subcellular location">
    <subcellularLocation>
        <location evidence="2">Cell membrane</location>
        <topology evidence="2">Multi-pass membrane protein</topology>
    </subcellularLocation>
</comment>
<comment type="similarity">
    <text evidence="2">Belongs to the UPF0132 family.</text>
</comment>
<accession>O30131</accession>
<keyword id="KW-1003">Cell membrane</keyword>
<keyword id="KW-0472">Membrane</keyword>
<keyword id="KW-1185">Reference proteome</keyword>
<keyword id="KW-0812">Transmembrane</keyword>
<keyword id="KW-1133">Transmembrane helix</keyword>
<dbReference type="EMBL" id="AE000782">
    <property type="protein sequence ID" value="AAB91127.1"/>
    <property type="molecule type" value="Genomic_DNA"/>
</dbReference>
<dbReference type="PIR" id="A69263">
    <property type="entry name" value="A69263"/>
</dbReference>
<dbReference type="STRING" id="224325.AF_0105"/>
<dbReference type="PaxDb" id="224325-AF_0105"/>
<dbReference type="EnsemblBacteria" id="AAB91127">
    <property type="protein sequence ID" value="AAB91127"/>
    <property type="gene ID" value="AF_0105"/>
</dbReference>
<dbReference type="KEGG" id="afu:AF_0105"/>
<dbReference type="eggNOG" id="arCOG04344">
    <property type="taxonomic scope" value="Archaea"/>
</dbReference>
<dbReference type="HOGENOM" id="CLU_095018_3_0_2"/>
<dbReference type="OrthoDB" id="329551at2157"/>
<dbReference type="PhylomeDB" id="O30131"/>
<dbReference type="Proteomes" id="UP000002199">
    <property type="component" value="Chromosome"/>
</dbReference>
<dbReference type="GO" id="GO:0005886">
    <property type="term" value="C:plasma membrane"/>
    <property type="evidence" value="ECO:0007669"/>
    <property type="project" value="UniProtKB-SubCell"/>
</dbReference>
<dbReference type="InterPro" id="IPR019109">
    <property type="entry name" value="DUF4870"/>
</dbReference>
<dbReference type="PANTHER" id="PTHR36460">
    <property type="entry name" value="UPF0132 DOMAIN PROTEIN (AFU_ORTHOLOGUE AFUA_3G10255)"/>
    <property type="match status" value="1"/>
</dbReference>
<dbReference type="PANTHER" id="PTHR36460:SF1">
    <property type="entry name" value="UPF0132 DOMAIN PROTEIN (AFU_ORTHOLOGUE AFUA_3G10255)"/>
    <property type="match status" value="1"/>
</dbReference>
<dbReference type="Pfam" id="PF09685">
    <property type="entry name" value="DUF4870"/>
    <property type="match status" value="1"/>
</dbReference>
<feature type="chain" id="PRO_0000158604" description="UPF0132 membrane protein AF_0105">
    <location>
        <begin position="1"/>
        <end position="103"/>
    </location>
</feature>
<feature type="transmembrane region" description="Helical" evidence="1">
    <location>
        <begin position="5"/>
        <end position="25"/>
    </location>
</feature>
<feature type="transmembrane region" description="Helical" evidence="1">
    <location>
        <begin position="35"/>
        <end position="55"/>
    </location>
</feature>
<feature type="transmembrane region" description="Helical" evidence="1">
    <location>
        <begin position="58"/>
        <end position="78"/>
    </location>
</feature>
<evidence type="ECO:0000255" key="1"/>
<evidence type="ECO:0000305" key="2"/>
<sequence>MKENVAGALSYLLGPITGILFLLMEKESQFVKFHAMQSTITFAGFWVLDIALSFIPYIGVLLIPIVGLVAFITWLVCIYKAYSNEWFKLPVVGDIAEQQIGGV</sequence>
<protein>
    <recommendedName>
        <fullName>UPF0132 membrane protein AF_0105</fullName>
    </recommendedName>
</protein>
<name>Y105_ARCFU</name>
<organism>
    <name type="scientific">Archaeoglobus fulgidus (strain ATCC 49558 / DSM 4304 / JCM 9628 / NBRC 100126 / VC-16)</name>
    <dbReference type="NCBI Taxonomy" id="224325"/>
    <lineage>
        <taxon>Archaea</taxon>
        <taxon>Methanobacteriati</taxon>
        <taxon>Methanobacteriota</taxon>
        <taxon>Archaeoglobi</taxon>
        <taxon>Archaeoglobales</taxon>
        <taxon>Archaeoglobaceae</taxon>
        <taxon>Archaeoglobus</taxon>
    </lineage>
</organism>